<dbReference type="EMBL" id="AE007870">
    <property type="protein sequence ID" value="AAK90199.1"/>
    <property type="molecule type" value="Genomic_DNA"/>
</dbReference>
<dbReference type="PIR" id="AE2948">
    <property type="entry name" value="AE2948"/>
</dbReference>
<dbReference type="PIR" id="E98334">
    <property type="entry name" value="E98334"/>
</dbReference>
<dbReference type="RefSeq" id="NP_357414.1">
    <property type="nucleotide sequence ID" value="NC_003063.2"/>
</dbReference>
<dbReference type="RefSeq" id="WP_010972831.1">
    <property type="nucleotide sequence ID" value="NC_003063.2"/>
</dbReference>
<dbReference type="SMR" id="Q8UB30"/>
<dbReference type="STRING" id="176299.Atu3187"/>
<dbReference type="EnsemblBacteria" id="AAK90199">
    <property type="protein sequence ID" value="AAK90199"/>
    <property type="gene ID" value="Atu3187"/>
</dbReference>
<dbReference type="GeneID" id="1134989"/>
<dbReference type="KEGG" id="atu:Atu3187"/>
<dbReference type="PATRIC" id="fig|176299.10.peg.3032"/>
<dbReference type="eggNOG" id="COG0395">
    <property type="taxonomic scope" value="Bacteria"/>
</dbReference>
<dbReference type="HOGENOM" id="CLU_016047_1_1_5"/>
<dbReference type="OrthoDB" id="9815445at2"/>
<dbReference type="PhylomeDB" id="Q8UB30"/>
<dbReference type="BioCyc" id="AGRO:ATU3187-MONOMER"/>
<dbReference type="Proteomes" id="UP000000813">
    <property type="component" value="Chromosome linear"/>
</dbReference>
<dbReference type="GO" id="GO:0005886">
    <property type="term" value="C:plasma membrane"/>
    <property type="evidence" value="ECO:0007669"/>
    <property type="project" value="UniProtKB-SubCell"/>
</dbReference>
<dbReference type="GO" id="GO:0055085">
    <property type="term" value="P:transmembrane transport"/>
    <property type="evidence" value="ECO:0007669"/>
    <property type="project" value="InterPro"/>
</dbReference>
<dbReference type="CDD" id="cd06261">
    <property type="entry name" value="TM_PBP2"/>
    <property type="match status" value="1"/>
</dbReference>
<dbReference type="Gene3D" id="1.10.3720.10">
    <property type="entry name" value="MetI-like"/>
    <property type="match status" value="1"/>
</dbReference>
<dbReference type="InterPro" id="IPR000515">
    <property type="entry name" value="MetI-like"/>
</dbReference>
<dbReference type="InterPro" id="IPR035906">
    <property type="entry name" value="MetI-like_sf"/>
</dbReference>
<dbReference type="NCBIfam" id="NF008210">
    <property type="entry name" value="PRK10973.1"/>
    <property type="match status" value="1"/>
</dbReference>
<dbReference type="PANTHER" id="PTHR43744">
    <property type="entry name" value="ABC TRANSPORTER PERMEASE PROTEIN MG189-RELATED-RELATED"/>
    <property type="match status" value="1"/>
</dbReference>
<dbReference type="PANTHER" id="PTHR43744:SF8">
    <property type="entry name" value="SN-GLYCEROL-3-PHOSPHATE TRANSPORT SYSTEM PERMEASE PROTEIN UGPE"/>
    <property type="match status" value="1"/>
</dbReference>
<dbReference type="Pfam" id="PF00528">
    <property type="entry name" value="BPD_transp_1"/>
    <property type="match status" value="1"/>
</dbReference>
<dbReference type="SUPFAM" id="SSF161098">
    <property type="entry name" value="MetI-like"/>
    <property type="match status" value="1"/>
</dbReference>
<dbReference type="PROSITE" id="PS50928">
    <property type="entry name" value="ABC_TM1"/>
    <property type="match status" value="1"/>
</dbReference>
<sequence length="282" mass="31770">MIENRPIARVIAHLMLVLGIIIVAFPIYYTFIASSMTSNDIIRPPMSLLPGDHLSANYTEAMVGGVERVVGVSLERLLFNSFVVALAIAIGKIVISFLSAFAIVFFRFPFRMGFFWMIFITLMLPVEVRILPTYKVIVDLGLIDTYAGLTLPLMASATATFLFRQFFLTIPGELVEAARIDNAGPFRFMRDILLPLSRTNIAALFVILFIYGWTQYLWPLLVTNDAKMNTIIIGLKRMVDFTDASTPWNYVMVTAILAIIPPVMVVVLMQRWFVKGLVETEK</sequence>
<name>UGPE_AGRFC</name>
<reference key="1">
    <citation type="journal article" date="2001" name="Science">
        <title>The genome of the natural genetic engineer Agrobacterium tumefaciens C58.</title>
        <authorList>
            <person name="Wood D.W."/>
            <person name="Setubal J.C."/>
            <person name="Kaul R."/>
            <person name="Monks D.E."/>
            <person name="Kitajima J.P."/>
            <person name="Okura V.K."/>
            <person name="Zhou Y."/>
            <person name="Chen L."/>
            <person name="Wood G.E."/>
            <person name="Almeida N.F. Jr."/>
            <person name="Woo L."/>
            <person name="Chen Y."/>
            <person name="Paulsen I.T."/>
            <person name="Eisen J.A."/>
            <person name="Karp P.D."/>
            <person name="Bovee D. Sr."/>
            <person name="Chapman P."/>
            <person name="Clendenning J."/>
            <person name="Deatherage G."/>
            <person name="Gillet W."/>
            <person name="Grant C."/>
            <person name="Kutyavin T."/>
            <person name="Levy R."/>
            <person name="Li M.-J."/>
            <person name="McClelland E."/>
            <person name="Palmieri A."/>
            <person name="Raymond C."/>
            <person name="Rouse G."/>
            <person name="Saenphimmachak C."/>
            <person name="Wu Z."/>
            <person name="Romero P."/>
            <person name="Gordon D."/>
            <person name="Zhang S."/>
            <person name="Yoo H."/>
            <person name="Tao Y."/>
            <person name="Biddle P."/>
            <person name="Jung M."/>
            <person name="Krespan W."/>
            <person name="Perry M."/>
            <person name="Gordon-Kamm B."/>
            <person name="Liao L."/>
            <person name="Kim S."/>
            <person name="Hendrick C."/>
            <person name="Zhao Z.-Y."/>
            <person name="Dolan M."/>
            <person name="Chumley F."/>
            <person name="Tingey S.V."/>
            <person name="Tomb J.-F."/>
            <person name="Gordon M.P."/>
            <person name="Olson M.V."/>
            <person name="Nester E.W."/>
        </authorList>
    </citation>
    <scope>NUCLEOTIDE SEQUENCE [LARGE SCALE GENOMIC DNA]</scope>
    <source>
        <strain>C58 / ATCC 33970</strain>
    </source>
</reference>
<reference key="2">
    <citation type="journal article" date="2001" name="Science">
        <title>Genome sequence of the plant pathogen and biotechnology agent Agrobacterium tumefaciens C58.</title>
        <authorList>
            <person name="Goodner B."/>
            <person name="Hinkle G."/>
            <person name="Gattung S."/>
            <person name="Miller N."/>
            <person name="Blanchard M."/>
            <person name="Qurollo B."/>
            <person name="Goldman B.S."/>
            <person name="Cao Y."/>
            <person name="Askenazi M."/>
            <person name="Halling C."/>
            <person name="Mullin L."/>
            <person name="Houmiel K."/>
            <person name="Gordon J."/>
            <person name="Vaudin M."/>
            <person name="Iartchouk O."/>
            <person name="Epp A."/>
            <person name="Liu F."/>
            <person name="Wollam C."/>
            <person name="Allinger M."/>
            <person name="Doughty D."/>
            <person name="Scott C."/>
            <person name="Lappas C."/>
            <person name="Markelz B."/>
            <person name="Flanagan C."/>
            <person name="Crowell C."/>
            <person name="Gurson J."/>
            <person name="Lomo C."/>
            <person name="Sear C."/>
            <person name="Strub G."/>
            <person name="Cielo C."/>
            <person name="Slater S."/>
        </authorList>
    </citation>
    <scope>NUCLEOTIDE SEQUENCE [LARGE SCALE GENOMIC DNA]</scope>
    <source>
        <strain>C58 / ATCC 33970</strain>
    </source>
</reference>
<comment type="function">
    <text evidence="1">Part of the ABC transporter complex UgpBAEC involved in sn-glycerol-3-phosphate (G3P) import. Probably responsible for the translocation of the substrate across the membrane.</text>
</comment>
<comment type="subunit">
    <text evidence="1">The complex is composed of two ATP-binding proteins (UgpC), two transmembrane proteins (UgpA and UgpE) and a solute-binding protein (UgpB).</text>
</comment>
<comment type="subcellular location">
    <subcellularLocation>
        <location evidence="1">Cell inner membrane</location>
        <topology evidence="2">Multi-pass membrane protein</topology>
    </subcellularLocation>
</comment>
<comment type="similarity">
    <text evidence="4">Belongs to the binding-protein-dependent transport system permease family.</text>
</comment>
<gene>
    <name type="primary">ugpE</name>
    <name type="ordered locus">Atu3187</name>
    <name type="ORF">AGR_L_3246</name>
</gene>
<protein>
    <recommendedName>
        <fullName evidence="1">sn-glycerol-3-phosphate transport system permease protein UgpE</fullName>
    </recommendedName>
</protein>
<evidence type="ECO:0000250" key="1">
    <source>
        <dbReference type="UniProtKB" id="P10906"/>
    </source>
</evidence>
<evidence type="ECO:0000255" key="2"/>
<evidence type="ECO:0000255" key="3">
    <source>
        <dbReference type="PROSITE-ProRule" id="PRU00441"/>
    </source>
</evidence>
<evidence type="ECO:0000305" key="4"/>
<proteinExistence type="inferred from homology"/>
<feature type="chain" id="PRO_0000290136" description="sn-glycerol-3-phosphate transport system permease protein UgpE">
    <location>
        <begin position="1"/>
        <end position="282"/>
    </location>
</feature>
<feature type="transmembrane region" description="Helical" evidence="3">
    <location>
        <begin position="14"/>
        <end position="34"/>
    </location>
</feature>
<feature type="transmembrane region" description="Helical" evidence="3">
    <location>
        <begin position="86"/>
        <end position="106"/>
    </location>
</feature>
<feature type="transmembrane region" description="Helical" evidence="3">
    <location>
        <begin position="112"/>
        <end position="132"/>
    </location>
</feature>
<feature type="transmembrane region" description="Helical" evidence="3">
    <location>
        <begin position="146"/>
        <end position="168"/>
    </location>
</feature>
<feature type="transmembrane region" description="Helical" evidence="3">
    <location>
        <begin position="201"/>
        <end position="221"/>
    </location>
</feature>
<feature type="transmembrane region" description="Helical" evidence="3">
    <location>
        <begin position="248"/>
        <end position="268"/>
    </location>
</feature>
<feature type="domain" description="ABC transmembrane type-1" evidence="3">
    <location>
        <begin position="78"/>
        <end position="269"/>
    </location>
</feature>
<accession>Q8UB30</accession>
<accession>Q7CRU4</accession>
<organism>
    <name type="scientific">Agrobacterium fabrum (strain C58 / ATCC 33970)</name>
    <name type="common">Agrobacterium tumefaciens (strain C58)</name>
    <dbReference type="NCBI Taxonomy" id="176299"/>
    <lineage>
        <taxon>Bacteria</taxon>
        <taxon>Pseudomonadati</taxon>
        <taxon>Pseudomonadota</taxon>
        <taxon>Alphaproteobacteria</taxon>
        <taxon>Hyphomicrobiales</taxon>
        <taxon>Rhizobiaceae</taxon>
        <taxon>Rhizobium/Agrobacterium group</taxon>
        <taxon>Agrobacterium</taxon>
        <taxon>Agrobacterium tumefaciens complex</taxon>
    </lineage>
</organism>
<keyword id="KW-0997">Cell inner membrane</keyword>
<keyword id="KW-1003">Cell membrane</keyword>
<keyword id="KW-0472">Membrane</keyword>
<keyword id="KW-1185">Reference proteome</keyword>
<keyword id="KW-0812">Transmembrane</keyword>
<keyword id="KW-1133">Transmembrane helix</keyword>
<keyword id="KW-0813">Transport</keyword>